<proteinExistence type="inferred from homology"/>
<reference key="1">
    <citation type="submission" date="2007-03" db="EMBL/GenBank/DDBJ databases">
        <title>Complete sequence of chromosome of Methanococcus maripaludis C5.</title>
        <authorList>
            <consortium name="US DOE Joint Genome Institute"/>
            <person name="Copeland A."/>
            <person name="Lucas S."/>
            <person name="Lapidus A."/>
            <person name="Barry K."/>
            <person name="Glavina del Rio T."/>
            <person name="Dalin E."/>
            <person name="Tice H."/>
            <person name="Pitluck S."/>
            <person name="Chertkov O."/>
            <person name="Brettin T."/>
            <person name="Bruce D."/>
            <person name="Han C."/>
            <person name="Detter J.C."/>
            <person name="Schmutz J."/>
            <person name="Larimer F."/>
            <person name="Land M."/>
            <person name="Hauser L."/>
            <person name="Kyrpides N."/>
            <person name="Mikhailova N."/>
            <person name="Sieprawska-Lupa M."/>
            <person name="Whitman W.B."/>
            <person name="Richardson P."/>
        </authorList>
    </citation>
    <scope>NUCLEOTIDE SEQUENCE [LARGE SCALE GENOMIC DNA]</scope>
    <source>
        <strain>C5 / ATCC BAA-1333</strain>
    </source>
</reference>
<dbReference type="EC" id="2.5.1.73" evidence="1"/>
<dbReference type="EMBL" id="CP000609">
    <property type="protein sequence ID" value="ABO34667.1"/>
    <property type="molecule type" value="Genomic_DNA"/>
</dbReference>
<dbReference type="RefSeq" id="WP_011868122.1">
    <property type="nucleotide sequence ID" value="NC_009135.1"/>
</dbReference>
<dbReference type="SMR" id="A4FWT8"/>
<dbReference type="STRING" id="402880.MmarC5_0351"/>
<dbReference type="GeneID" id="4929094"/>
<dbReference type="KEGG" id="mmq:MmarC5_0351"/>
<dbReference type="eggNOG" id="arCOG00091">
    <property type="taxonomic scope" value="Archaea"/>
</dbReference>
<dbReference type="HOGENOM" id="CLU_060476_0_0_2"/>
<dbReference type="OrthoDB" id="5817at2157"/>
<dbReference type="BRENDA" id="2.5.1.73">
    <property type="organism ID" value="3262"/>
</dbReference>
<dbReference type="Proteomes" id="UP000000253">
    <property type="component" value="Chromosome"/>
</dbReference>
<dbReference type="GO" id="GO:0043766">
    <property type="term" value="F:Sep-tRNA:Cys-tRNA synthase activity"/>
    <property type="evidence" value="ECO:0007669"/>
    <property type="project" value="UniProtKB-UniRule"/>
</dbReference>
<dbReference type="GO" id="GO:0006412">
    <property type="term" value="P:translation"/>
    <property type="evidence" value="ECO:0007669"/>
    <property type="project" value="UniProtKB-KW"/>
</dbReference>
<dbReference type="Gene3D" id="3.90.1150.10">
    <property type="entry name" value="Aspartate Aminotransferase, domain 1"/>
    <property type="match status" value="1"/>
</dbReference>
<dbReference type="Gene3D" id="3.40.640.10">
    <property type="entry name" value="Type I PLP-dependent aspartate aminotransferase-like (Major domain)"/>
    <property type="match status" value="1"/>
</dbReference>
<dbReference type="HAMAP" id="MF_01675">
    <property type="entry name" value="Sep_Cys_tRNA_synth"/>
    <property type="match status" value="1"/>
</dbReference>
<dbReference type="InterPro" id="IPR015424">
    <property type="entry name" value="PyrdxlP-dep_Trfase"/>
</dbReference>
<dbReference type="InterPro" id="IPR015421">
    <property type="entry name" value="PyrdxlP-dep_Trfase_major"/>
</dbReference>
<dbReference type="InterPro" id="IPR015422">
    <property type="entry name" value="PyrdxlP-dep_Trfase_small"/>
</dbReference>
<dbReference type="InterPro" id="IPR013375">
    <property type="entry name" value="Sep_Cys-tRNA_synth_arc"/>
</dbReference>
<dbReference type="InterPro" id="IPR008829">
    <property type="entry name" value="SepSecS/SepCysS"/>
</dbReference>
<dbReference type="NCBIfam" id="NF006810">
    <property type="entry name" value="PRK09331.1"/>
    <property type="match status" value="1"/>
</dbReference>
<dbReference type="NCBIfam" id="TIGR02539">
    <property type="entry name" value="SepCysS"/>
    <property type="match status" value="1"/>
</dbReference>
<dbReference type="PANTHER" id="PTHR43586">
    <property type="entry name" value="CYSTEINE DESULFURASE"/>
    <property type="match status" value="1"/>
</dbReference>
<dbReference type="PANTHER" id="PTHR43586:SF3">
    <property type="entry name" value="O-PHOSPHO-L-SERYL-TRNA:CYS-TRNA SYNTHASE"/>
    <property type="match status" value="1"/>
</dbReference>
<dbReference type="Pfam" id="PF05889">
    <property type="entry name" value="SepSecS"/>
    <property type="match status" value="1"/>
</dbReference>
<dbReference type="SUPFAM" id="SSF53383">
    <property type="entry name" value="PLP-dependent transferases"/>
    <property type="match status" value="1"/>
</dbReference>
<name>SPSS_METM5</name>
<evidence type="ECO:0000255" key="1">
    <source>
        <dbReference type="HAMAP-Rule" id="MF_01675"/>
    </source>
</evidence>
<sequence length="380" mass="43395">MEINTDKYKNITRNLEREMINLNPIQRGGILPTESKKIIYEYWDGYSVCDYCSGRLDRIETPPINEFLEDMSKFLGMDITRPTHGARESKYAVMNSICKEGDYVVLDGNAHYTSYVAIERAKLNYEKTDIGEYPTFRVIPESYAEKIDMLEDSKKNIGLILLTHVDGNYGNVADVEKVGKIAKSKGYPFLLNCAYSAGRMPIDGKKLNVDFIAASGHKSMAASGPCGLLSINKKYEDEVLETSKVNVVKELQMLGCTSRGIPILSLMASFERLIERVKKWDLELEKTRKVVNELEPLGFKQIGEKPRNHDIIRFETPILDEIAEKDKRRGFFFYEELKRRGLGGIRRGVTKEFKMSVYGLTNTQVDYVINSMKTIINELR</sequence>
<organism>
    <name type="scientific">Methanococcus maripaludis (strain C5 / ATCC BAA-1333)</name>
    <dbReference type="NCBI Taxonomy" id="402880"/>
    <lineage>
        <taxon>Archaea</taxon>
        <taxon>Methanobacteriati</taxon>
        <taxon>Methanobacteriota</taxon>
        <taxon>Methanomada group</taxon>
        <taxon>Methanococci</taxon>
        <taxon>Methanococcales</taxon>
        <taxon>Methanococcaceae</taxon>
        <taxon>Methanococcus</taxon>
    </lineage>
</organism>
<comment type="function">
    <text evidence="1">Converts O-phospho-L-seryl-tRNA(Cys) (Sep-tRNA(Cys)) to L-cysteinyl-tRNA(Cys) (Cys-tRNA(Cys)).</text>
</comment>
<comment type="catalytic activity">
    <reaction evidence="1">
        <text>O-phospho-L-seryl-tRNA(Cys) + hydrogen sulfide + H(+) = L-cysteinyl-tRNA(Cys) + phosphate</text>
        <dbReference type="Rhea" id="RHEA:25686"/>
        <dbReference type="Rhea" id="RHEA-COMP:9679"/>
        <dbReference type="Rhea" id="RHEA-COMP:9719"/>
        <dbReference type="ChEBI" id="CHEBI:15378"/>
        <dbReference type="ChEBI" id="CHEBI:29919"/>
        <dbReference type="ChEBI" id="CHEBI:43474"/>
        <dbReference type="ChEBI" id="CHEBI:78517"/>
        <dbReference type="ChEBI" id="CHEBI:78551"/>
        <dbReference type="EC" id="2.5.1.73"/>
    </reaction>
</comment>
<comment type="cofactor">
    <cofactor evidence="1">
        <name>pyridoxal 5'-phosphate</name>
        <dbReference type="ChEBI" id="CHEBI:597326"/>
    </cofactor>
</comment>
<comment type="subunit">
    <text evidence="1">Homodimer. Interacts with SepRS.</text>
</comment>
<comment type="similarity">
    <text evidence="1">Belongs to the SepCysS family.</text>
</comment>
<feature type="chain" id="PRO_0000359449" description="O-phospho-L-seryl-tRNA:Cys-tRNA synthase">
    <location>
        <begin position="1"/>
        <end position="380"/>
    </location>
</feature>
<feature type="binding site" evidence="1">
    <location>
        <begin position="86"/>
        <end position="87"/>
    </location>
    <ligand>
        <name>pyridoxal 5'-phosphate</name>
        <dbReference type="ChEBI" id="CHEBI:597326"/>
    </ligand>
</feature>
<feature type="binding site" evidence="1">
    <location>
        <position position="192"/>
    </location>
    <ligand>
        <name>pyridoxal 5'-phosphate</name>
        <dbReference type="ChEBI" id="CHEBI:597326"/>
    </ligand>
</feature>
<feature type="binding site" evidence="1">
    <location>
        <begin position="215"/>
        <end position="217"/>
    </location>
    <ligand>
        <name>pyridoxal 5'-phosphate</name>
        <dbReference type="ChEBI" id="CHEBI:597326"/>
    </ligand>
</feature>
<feature type="modified residue" description="N6-(pyridoxal phosphate)lysine" evidence="1">
    <location>
        <position position="218"/>
    </location>
</feature>
<protein>
    <recommendedName>
        <fullName evidence="1">O-phospho-L-seryl-tRNA:Cys-tRNA synthase</fullName>
        <ecNumber evidence="1">2.5.1.73</ecNumber>
    </recommendedName>
    <alternativeName>
        <fullName evidence="1">Sep-tRNA:Cys-tRNA synthase</fullName>
        <shortName evidence="1">SepCysS</shortName>
    </alternativeName>
</protein>
<keyword id="KW-0648">Protein biosynthesis</keyword>
<keyword id="KW-0663">Pyridoxal phosphate</keyword>
<keyword id="KW-0808">Transferase</keyword>
<accession>A4FWT8</accession>
<gene>
    <name type="ordered locus">MmarC5_0351</name>
</gene>